<accession>C3NEB3</accession>
<comment type="similarity">
    <text evidence="1">Belongs to the eukaryotic ribosomal protein eL21 family.</text>
</comment>
<sequence length="101" mass="11382">MVKHSRGYRTRSRSLLRKSPRERGAVPSLSRLMVEYKEGDKVVIKINPSVHSGMPHRRYQGKVGKIIGKRGRAYLVSVTLGDKQKVIIVRPEHLVSFSSSG</sequence>
<protein>
    <recommendedName>
        <fullName evidence="1">Large ribosomal subunit protein eL21</fullName>
    </recommendedName>
    <alternativeName>
        <fullName evidence="3">50S ribosomal protein L21e</fullName>
    </alternativeName>
</protein>
<proteinExistence type="inferred from homology"/>
<organism>
    <name type="scientific">Saccharolobus islandicus (strain Y.G.57.14 / Yellowstone #1)</name>
    <name type="common">Sulfolobus islandicus</name>
    <dbReference type="NCBI Taxonomy" id="439386"/>
    <lineage>
        <taxon>Archaea</taxon>
        <taxon>Thermoproteota</taxon>
        <taxon>Thermoprotei</taxon>
        <taxon>Sulfolobales</taxon>
        <taxon>Sulfolobaceae</taxon>
        <taxon>Saccharolobus</taxon>
    </lineage>
</organism>
<dbReference type="EMBL" id="CP001403">
    <property type="protein sequence ID" value="ACP45652.1"/>
    <property type="molecule type" value="Genomic_DNA"/>
</dbReference>
<dbReference type="RefSeq" id="WP_012716168.1">
    <property type="nucleotide sequence ID" value="NC_012622.1"/>
</dbReference>
<dbReference type="SMR" id="C3NEB3"/>
<dbReference type="GeneID" id="7806778"/>
<dbReference type="KEGG" id="siy:YG5714_1385"/>
<dbReference type="HOGENOM" id="CLU_103610_1_1_2"/>
<dbReference type="Proteomes" id="UP000002308">
    <property type="component" value="Chromosome"/>
</dbReference>
<dbReference type="GO" id="GO:1990904">
    <property type="term" value="C:ribonucleoprotein complex"/>
    <property type="evidence" value="ECO:0007669"/>
    <property type="project" value="UniProtKB-KW"/>
</dbReference>
<dbReference type="GO" id="GO:0005840">
    <property type="term" value="C:ribosome"/>
    <property type="evidence" value="ECO:0007669"/>
    <property type="project" value="UniProtKB-KW"/>
</dbReference>
<dbReference type="GO" id="GO:0003735">
    <property type="term" value="F:structural constituent of ribosome"/>
    <property type="evidence" value="ECO:0007669"/>
    <property type="project" value="InterPro"/>
</dbReference>
<dbReference type="GO" id="GO:0006412">
    <property type="term" value="P:translation"/>
    <property type="evidence" value="ECO:0007669"/>
    <property type="project" value="UniProtKB-UniRule"/>
</dbReference>
<dbReference type="FunFam" id="2.30.30.70:FF:000001">
    <property type="entry name" value="60S ribosomal protein L21"/>
    <property type="match status" value="1"/>
</dbReference>
<dbReference type="Gene3D" id="2.30.30.70">
    <property type="entry name" value="Ribosomal protein L21"/>
    <property type="match status" value="1"/>
</dbReference>
<dbReference type="HAMAP" id="MF_00369">
    <property type="entry name" value="Ribosomal_eL21"/>
    <property type="match status" value="1"/>
</dbReference>
<dbReference type="InterPro" id="IPR001147">
    <property type="entry name" value="Ribosomal_eL21"/>
</dbReference>
<dbReference type="InterPro" id="IPR022856">
    <property type="entry name" value="Ribosomal_eL21_arc"/>
</dbReference>
<dbReference type="InterPro" id="IPR018259">
    <property type="entry name" value="Ribosomal_eL21_CS"/>
</dbReference>
<dbReference type="InterPro" id="IPR036948">
    <property type="entry name" value="Ribosomal_eL21_sf"/>
</dbReference>
<dbReference type="InterPro" id="IPR008991">
    <property type="entry name" value="Translation_prot_SH3-like_sf"/>
</dbReference>
<dbReference type="NCBIfam" id="NF003303">
    <property type="entry name" value="PRK04306.1"/>
    <property type="match status" value="1"/>
</dbReference>
<dbReference type="PANTHER" id="PTHR20981">
    <property type="entry name" value="60S RIBOSOMAL PROTEIN L21"/>
    <property type="match status" value="1"/>
</dbReference>
<dbReference type="Pfam" id="PF01157">
    <property type="entry name" value="Ribosomal_L21e"/>
    <property type="match status" value="1"/>
</dbReference>
<dbReference type="SUPFAM" id="SSF50104">
    <property type="entry name" value="Translation proteins SH3-like domain"/>
    <property type="match status" value="1"/>
</dbReference>
<dbReference type="PROSITE" id="PS01171">
    <property type="entry name" value="RIBOSOMAL_L21E"/>
    <property type="match status" value="1"/>
</dbReference>
<keyword id="KW-0687">Ribonucleoprotein</keyword>
<keyword id="KW-0689">Ribosomal protein</keyword>
<gene>
    <name evidence="1" type="primary">rpl21e</name>
    <name type="ordered locus">YG5714_1385</name>
</gene>
<evidence type="ECO:0000255" key="1">
    <source>
        <dbReference type="HAMAP-Rule" id="MF_00369"/>
    </source>
</evidence>
<evidence type="ECO:0000256" key="2">
    <source>
        <dbReference type="SAM" id="MobiDB-lite"/>
    </source>
</evidence>
<evidence type="ECO:0000305" key="3"/>
<name>RL21_SACI7</name>
<reference key="1">
    <citation type="journal article" date="2009" name="Proc. Natl. Acad. Sci. U.S.A.">
        <title>Biogeography of the Sulfolobus islandicus pan-genome.</title>
        <authorList>
            <person name="Reno M.L."/>
            <person name="Held N.L."/>
            <person name="Fields C.J."/>
            <person name="Burke P.V."/>
            <person name="Whitaker R.J."/>
        </authorList>
    </citation>
    <scope>NUCLEOTIDE SEQUENCE [LARGE SCALE GENOMIC DNA]</scope>
    <source>
        <strain>Y.G.57.14 / Yellowstone #1</strain>
    </source>
</reference>
<feature type="chain" id="PRO_1000205578" description="Large ribosomal subunit protein eL21">
    <location>
        <begin position="1"/>
        <end position="101"/>
    </location>
</feature>
<feature type="region of interest" description="Disordered" evidence="2">
    <location>
        <begin position="1"/>
        <end position="23"/>
    </location>
</feature>
<feature type="compositionally biased region" description="Basic residues" evidence="2">
    <location>
        <begin position="1"/>
        <end position="18"/>
    </location>
</feature>